<keyword id="KW-0002">3D-structure</keyword>
<keyword id="KW-0025">Alternative splicing</keyword>
<keyword id="KW-0067">ATP-binding</keyword>
<keyword id="KW-0106">Calcium</keyword>
<keyword id="KW-0109">Calcium transport</keyword>
<keyword id="KW-1015">Disulfide bond</keyword>
<keyword id="KW-0256">Endoplasmic reticulum</keyword>
<keyword id="KW-0406">Ion transport</keyword>
<keyword id="KW-0460">Magnesium</keyword>
<keyword id="KW-0472">Membrane</keyword>
<keyword id="KW-0479">Metal-binding</keyword>
<keyword id="KW-0944">Nitration</keyword>
<keyword id="KW-0547">Nucleotide-binding</keyword>
<keyword id="KW-0597">Phosphoprotein</keyword>
<keyword id="KW-1185">Reference proteome</keyword>
<keyword id="KW-0703">Sarcoplasmic reticulum</keyword>
<keyword id="KW-1278">Translocase</keyword>
<keyword id="KW-0812">Transmembrane</keyword>
<keyword id="KW-1133">Transmembrane helix</keyword>
<keyword id="KW-0813">Transport</keyword>
<evidence type="ECO:0000250" key="1"/>
<evidence type="ECO:0000250" key="2">
    <source>
        <dbReference type="UniProtKB" id="O46674"/>
    </source>
</evidence>
<evidence type="ECO:0000250" key="3">
    <source>
        <dbReference type="UniProtKB" id="O55143"/>
    </source>
</evidence>
<evidence type="ECO:0000250" key="4">
    <source>
        <dbReference type="UniProtKB" id="P04191"/>
    </source>
</evidence>
<evidence type="ECO:0000250" key="5">
    <source>
        <dbReference type="UniProtKB" id="P16615"/>
    </source>
</evidence>
<evidence type="ECO:0000250" key="6">
    <source>
        <dbReference type="UniProtKB" id="Q64578"/>
    </source>
</evidence>
<evidence type="ECO:0000250" key="7">
    <source>
        <dbReference type="UniProtKB" id="Q8R429"/>
    </source>
</evidence>
<evidence type="ECO:0000269" key="8">
    <source>
    </source>
</evidence>
<evidence type="ECO:0000269" key="9">
    <source>
    </source>
</evidence>
<evidence type="ECO:0000303" key="10">
    <source>
    </source>
</evidence>
<evidence type="ECO:0000305" key="11"/>
<evidence type="ECO:0000305" key="12">
    <source>
    </source>
</evidence>
<evidence type="ECO:0007744" key="13">
    <source>
        <dbReference type="PDB" id="5MPM"/>
    </source>
</evidence>
<evidence type="ECO:0007744" key="14">
    <source>
        <dbReference type="PDB" id="6HXB"/>
    </source>
</evidence>
<evidence type="ECO:0007829" key="15">
    <source>
        <dbReference type="PDB" id="5MPM"/>
    </source>
</evidence>
<organism>
    <name type="scientific">Sus scrofa</name>
    <name type="common">Pig</name>
    <dbReference type="NCBI Taxonomy" id="9823"/>
    <lineage>
        <taxon>Eukaryota</taxon>
        <taxon>Metazoa</taxon>
        <taxon>Chordata</taxon>
        <taxon>Craniata</taxon>
        <taxon>Vertebrata</taxon>
        <taxon>Euteleostomi</taxon>
        <taxon>Mammalia</taxon>
        <taxon>Eutheria</taxon>
        <taxon>Laurasiatheria</taxon>
        <taxon>Artiodactyla</taxon>
        <taxon>Suina</taxon>
        <taxon>Suidae</taxon>
        <taxon>Sus</taxon>
    </lineage>
</organism>
<sequence length="1042" mass="114792">MENAHTKTVEEVLGHFGVNESTGLSLEQVKKLKERWGSNELPAEEGKTLLELVIEQFEDLLVRILLLAACISFVLAWFEEGEETITAFVEPFVILLILVANAIVGVWQERNAENAIEALKEYEPEMGKVYRQDRKSVQRIKAKDIVPGDIVEIAVGDKVPADIRLTSIKSTTLRVDQSILTGESVSVIKHTDPVPDPRAVNQDKKNMLFSGTNIAAGKAMGVVVATGVNTEIGKIRDEMVATEQERTPLQQKLDEFGEQLSKVISLICIAVWIINIGHFNDPVHGGSWIRGAIYYFKIAVALAVAAIPEGLPAVITTCLALGTRRMAKKNAIVRSLPSVETLGCTSVICSDKTGTLTTNQMSVCRMFILDKVEGDTCSLNEFTITGSTYAPIGEVHKDDKPVKCHQYDGLVELATICALCNDSALDYNEAKGVYEKVGEATETALTCLVEKMNVFDTELKGLSKIERANACNSVIKQLMKKEFTLEFSRDRKSMSVYCTPNKPSRTSMSKMFVKGAPEGVIDRCTHIRVGSTKVPMTPGVKQKIMSVIREWGSGSDTLRCLALATHDNPMRREEMNLEDSANFIKYETNLTFVGCVGMLDPPRIEVASSVKLCRQAGIRVIMITGDNKGTAVAICRRIGIFGQDEDVTSKAFTGREFDELNPSAQREACLNARCFARVEPSHKSKIVEFLQSFDEITAMTGDGVNDAPALKKSEIGIAMGSGTAVAKTASEMVLADDNFSTIVAAVEEGRAIYNNMKQFIRYLISSNVGEVVCIFLTAALGFPEALIPVQLLWVNLVTDGLPATALGFNPPDLDIMNKPPRNPKEPLISGWLFFRYLAIGCYVGAATVGAAAWWFIAADGGPRVTFYQLSHFLQCKEDNPDFEGVDCAVFESPYPMTMALSVLVTIEMCNALNSLSENQSLLRMPPWENIWLVGSICLSMSLHFLILYVEPLPLIFQITPLNLTQWLMVLKISLPVILMDETLKFVARNYLEPGKECVQPATKSCSFSACTDGISWPFVLLIMPLVIWVYSTDTNFSDMFWS</sequence>
<feature type="chain" id="PRO_0000046198" description="Sarcoplasmic/endoplasmic reticulum calcium ATPase 2">
    <location>
        <begin position="1"/>
        <end position="1042"/>
    </location>
</feature>
<feature type="topological domain" description="Cytoplasmic" evidence="11">
    <location>
        <begin position="1"/>
        <end position="48"/>
    </location>
</feature>
<feature type="transmembrane region" description="Helical; Name=1" evidence="4">
    <location>
        <begin position="49"/>
        <end position="69"/>
    </location>
</feature>
<feature type="topological domain" description="Lumenal" evidence="11">
    <location>
        <begin position="70"/>
        <end position="89"/>
    </location>
</feature>
<feature type="transmembrane region" description="Helical; Name=2" evidence="4">
    <location>
        <begin position="90"/>
        <end position="110"/>
    </location>
</feature>
<feature type="topological domain" description="Cytoplasmic" evidence="11">
    <location>
        <begin position="111"/>
        <end position="253"/>
    </location>
</feature>
<feature type="transmembrane region" description="Helical; Name=3" evidence="4">
    <location>
        <begin position="254"/>
        <end position="273"/>
    </location>
</feature>
<feature type="topological domain" description="Lumenal" evidence="11">
    <location>
        <begin position="274"/>
        <end position="295"/>
    </location>
</feature>
<feature type="transmembrane region" description="Helical; Name=4" evidence="4">
    <location>
        <begin position="296"/>
        <end position="313"/>
    </location>
</feature>
<feature type="topological domain" description="Cytoplasmic" evidence="11">
    <location>
        <begin position="314"/>
        <end position="756"/>
    </location>
</feature>
<feature type="transmembrane region" description="Helical; Name=5" evidence="4">
    <location>
        <begin position="757"/>
        <end position="776"/>
    </location>
</feature>
<feature type="topological domain" description="Lumenal" evidence="11">
    <location>
        <begin position="777"/>
        <end position="786"/>
    </location>
</feature>
<feature type="transmembrane region" description="Helical; Name=6" evidence="4">
    <location>
        <begin position="787"/>
        <end position="807"/>
    </location>
</feature>
<feature type="topological domain" description="Cytoplasmic" evidence="11">
    <location>
        <begin position="808"/>
        <end position="827"/>
    </location>
</feature>
<feature type="transmembrane region" description="Helical; Name=7" evidence="4">
    <location>
        <begin position="828"/>
        <end position="850"/>
    </location>
</feature>
<feature type="topological domain" description="Lumenal" evidence="11">
    <location>
        <begin position="851"/>
        <end position="896"/>
    </location>
</feature>
<feature type="transmembrane region" description="Helical; Name=8" evidence="4">
    <location>
        <begin position="897"/>
        <end position="916"/>
    </location>
</feature>
<feature type="topological domain" description="Cytoplasmic" evidence="11">
    <location>
        <begin position="917"/>
        <end position="929"/>
    </location>
</feature>
<feature type="transmembrane region" description="Helical; Name=9" evidence="4">
    <location>
        <begin position="930"/>
        <end position="948"/>
    </location>
</feature>
<feature type="topological domain" description="Lumenal" evidence="11">
    <location>
        <begin position="949"/>
        <end position="963"/>
    </location>
</feature>
<feature type="transmembrane region" description="Helical; Name=10" evidence="4">
    <location>
        <begin position="964"/>
        <end position="984"/>
    </location>
</feature>
<feature type="topological domain" description="Cytoplasmic" evidence="11">
    <location>
        <begin position="985"/>
        <end position="1042"/>
    </location>
</feature>
<feature type="region of interest" description="Interaction with HAX1" evidence="1">
    <location>
        <begin position="575"/>
        <end position="594"/>
    </location>
</feature>
<feature type="region of interest" description="Interaction with PLN" evidence="4">
    <location>
        <begin position="787"/>
        <end position="807"/>
    </location>
</feature>
<feature type="region of interest" description="Interaction with TMEM64 and PDIA3" evidence="3">
    <location>
        <begin position="788"/>
        <end position="1042"/>
    </location>
</feature>
<feature type="region of interest" description="Interaction with PLN" evidence="4">
    <location>
        <begin position="931"/>
        <end position="942"/>
    </location>
</feature>
<feature type="active site" description="4-aspartylphosphate intermediate" evidence="4">
    <location>
        <position position="351"/>
    </location>
</feature>
<feature type="binding site" evidence="12 14">
    <location>
        <position position="304"/>
    </location>
    <ligand>
        <name>Ca(2+)</name>
        <dbReference type="ChEBI" id="CHEBI:29108"/>
        <label>1</label>
    </ligand>
</feature>
<feature type="binding site" evidence="12 14">
    <location>
        <position position="305"/>
    </location>
    <ligand>
        <name>Ca(2+)</name>
        <dbReference type="ChEBI" id="CHEBI:29108"/>
        <label>1</label>
    </ligand>
</feature>
<feature type="binding site" evidence="12 14">
    <location>
        <position position="307"/>
    </location>
    <ligand>
        <name>Ca(2+)</name>
        <dbReference type="ChEBI" id="CHEBI:29108"/>
        <label>1</label>
    </ligand>
</feature>
<feature type="binding site" evidence="12 14">
    <location>
        <position position="309"/>
    </location>
    <ligand>
        <name>Ca(2+)</name>
        <dbReference type="ChEBI" id="CHEBI:29108"/>
        <label>1</label>
    </ligand>
</feature>
<feature type="binding site" evidence="9 13">
    <location>
        <position position="351"/>
    </location>
    <ligand>
        <name>Mg(2+)</name>
        <dbReference type="ChEBI" id="CHEBI:18420"/>
    </ligand>
</feature>
<feature type="binding site" evidence="12 14">
    <location>
        <position position="353"/>
    </location>
    <ligand>
        <name>ATP</name>
        <dbReference type="ChEBI" id="CHEBI:30616"/>
    </ligand>
</feature>
<feature type="binding site" evidence="9 13">
    <location>
        <position position="353"/>
    </location>
    <ligand>
        <name>Mg(2+)</name>
        <dbReference type="ChEBI" id="CHEBI:18420"/>
    </ligand>
</feature>
<feature type="binding site" evidence="12 14">
    <location>
        <position position="442"/>
    </location>
    <ligand>
        <name>ATP</name>
        <dbReference type="ChEBI" id="CHEBI:30616"/>
    </ligand>
</feature>
<feature type="binding site" evidence="12 14">
    <location>
        <position position="489"/>
    </location>
    <ligand>
        <name>ATP</name>
        <dbReference type="ChEBI" id="CHEBI:30616"/>
    </ligand>
</feature>
<feature type="binding site" evidence="12 14">
    <location>
        <position position="514"/>
    </location>
    <ligand>
        <name>ATP</name>
        <dbReference type="ChEBI" id="CHEBI:30616"/>
    </ligand>
</feature>
<feature type="binding site" evidence="4">
    <location>
        <position position="559"/>
    </location>
    <ligand>
        <name>ATP</name>
        <dbReference type="ChEBI" id="CHEBI:30616"/>
    </ligand>
</feature>
<feature type="binding site" evidence="4">
    <location>
        <position position="624"/>
    </location>
    <ligand>
        <name>ATP</name>
        <dbReference type="ChEBI" id="CHEBI:30616"/>
    </ligand>
</feature>
<feature type="binding site" evidence="4">
    <location>
        <position position="625"/>
    </location>
    <ligand>
        <name>ATP</name>
        <dbReference type="ChEBI" id="CHEBI:30616"/>
    </ligand>
</feature>
<feature type="binding site" evidence="12 14">
    <location>
        <position position="626"/>
    </location>
    <ligand>
        <name>ATP</name>
        <dbReference type="ChEBI" id="CHEBI:30616"/>
    </ligand>
</feature>
<feature type="binding site" evidence="12 14">
    <location>
        <position position="677"/>
    </location>
    <ligand>
        <name>ATP</name>
        <dbReference type="ChEBI" id="CHEBI:30616"/>
    </ligand>
</feature>
<feature type="binding site" evidence="4">
    <location>
        <position position="683"/>
    </location>
    <ligand>
        <name>ATP</name>
        <dbReference type="ChEBI" id="CHEBI:30616"/>
    </ligand>
</feature>
<feature type="binding site" evidence="9 13">
    <location>
        <position position="702"/>
    </location>
    <ligand>
        <name>Mg(2+)</name>
        <dbReference type="ChEBI" id="CHEBI:18420"/>
    </ligand>
</feature>
<feature type="binding site" evidence="12 14">
    <location>
        <position position="705"/>
    </location>
    <ligand>
        <name>ATP</name>
        <dbReference type="ChEBI" id="CHEBI:30616"/>
    </ligand>
</feature>
<feature type="binding site" evidence="12 14">
    <location>
        <position position="767"/>
    </location>
    <ligand>
        <name>Ca(2+)</name>
        <dbReference type="ChEBI" id="CHEBI:29108"/>
        <label>2</label>
    </ligand>
</feature>
<feature type="binding site" evidence="12 14">
    <location>
        <position position="770"/>
    </location>
    <ligand>
        <name>Ca(2+)</name>
        <dbReference type="ChEBI" id="CHEBI:29108"/>
        <label>2</label>
    </ligand>
</feature>
<feature type="binding site" evidence="12 14">
    <location>
        <position position="795"/>
    </location>
    <ligand>
        <name>Ca(2+)</name>
        <dbReference type="ChEBI" id="CHEBI:29108"/>
        <label>1</label>
    </ligand>
</feature>
<feature type="binding site" evidence="12 14">
    <location>
        <position position="798"/>
    </location>
    <ligand>
        <name>Ca(2+)</name>
        <dbReference type="ChEBI" id="CHEBI:29108"/>
        <label>2</label>
    </ligand>
</feature>
<feature type="binding site" evidence="12 14">
    <location>
        <position position="799"/>
    </location>
    <ligand>
        <name>Ca(2+)</name>
        <dbReference type="ChEBI" id="CHEBI:29108"/>
        <label>1</label>
    </ligand>
</feature>
<feature type="binding site" evidence="12 14">
    <location>
        <position position="799"/>
    </location>
    <ligand>
        <name>Ca(2+)</name>
        <dbReference type="ChEBI" id="CHEBI:29108"/>
        <label>2</label>
    </ligand>
</feature>
<feature type="binding site" evidence="4">
    <location>
        <position position="907"/>
    </location>
    <ligand>
        <name>Ca(2+)</name>
        <dbReference type="ChEBI" id="CHEBI:29108"/>
        <label>2</label>
    </ligand>
</feature>
<feature type="modified residue" description="Phosphoserine" evidence="3">
    <location>
        <position position="38"/>
    </location>
</feature>
<feature type="modified residue" description="3'-nitrotyrosine" evidence="5">
    <location>
        <position position="294"/>
    </location>
</feature>
<feature type="modified residue" description="3'-nitrotyrosine" evidence="5">
    <location>
        <position position="295"/>
    </location>
</feature>
<feature type="modified residue" description="Phosphothreonine" evidence="6">
    <location>
        <position position="441"/>
    </location>
</feature>
<feature type="modified residue" description="Phosphoserine" evidence="3">
    <location>
        <position position="531"/>
    </location>
</feature>
<feature type="modified residue" description="Phosphoserine" evidence="5">
    <location>
        <position position="580"/>
    </location>
</feature>
<feature type="modified residue" description="Phosphoserine" evidence="5">
    <location>
        <position position="663"/>
    </location>
</feature>
<feature type="disulfide bond" evidence="9 13">
    <location>
        <begin position="875"/>
        <end position="887"/>
    </location>
</feature>
<feature type="splice variant" id="VSP_000360" description="In isoform 2." evidence="10">
    <original>GKECVQPATKSCSFSACTDGISWPFVLLIMPLVIWVYSTDTNFSDMFWS</original>
    <variation>AILE</variation>
    <location>
        <begin position="994"/>
        <end position="1042"/>
    </location>
</feature>
<feature type="helix" evidence="15">
    <location>
        <begin position="4"/>
        <end position="6"/>
    </location>
</feature>
<feature type="helix" evidence="15">
    <location>
        <begin position="9"/>
        <end position="16"/>
    </location>
</feature>
<feature type="turn" evidence="15">
    <location>
        <begin position="20"/>
        <end position="22"/>
    </location>
</feature>
<feature type="helix" evidence="15">
    <location>
        <begin position="26"/>
        <end position="36"/>
    </location>
</feature>
<feature type="helix" evidence="15">
    <location>
        <begin position="49"/>
        <end position="57"/>
    </location>
</feature>
<feature type="helix" evidence="15">
    <location>
        <begin position="60"/>
        <end position="75"/>
    </location>
</feature>
<feature type="helix" evidence="15">
    <location>
        <begin position="84"/>
        <end position="87"/>
    </location>
</feature>
<feature type="helix" evidence="15">
    <location>
        <begin position="89"/>
        <end position="109"/>
    </location>
</feature>
<feature type="helix" evidence="15">
    <location>
        <begin position="115"/>
        <end position="119"/>
    </location>
</feature>
<feature type="helix" evidence="15">
    <location>
        <begin position="120"/>
        <end position="122"/>
    </location>
</feature>
<feature type="strand" evidence="15">
    <location>
        <begin position="125"/>
        <end position="131"/>
    </location>
</feature>
<feature type="strand" evidence="15">
    <location>
        <begin position="134"/>
        <end position="136"/>
    </location>
</feature>
<feature type="strand" evidence="15">
    <location>
        <begin position="138"/>
        <end position="141"/>
    </location>
</feature>
<feature type="helix" evidence="15">
    <location>
        <begin position="142"/>
        <end position="144"/>
    </location>
</feature>
<feature type="strand" evidence="15">
    <location>
        <begin position="150"/>
        <end position="153"/>
    </location>
</feature>
<feature type="strand" evidence="15">
    <location>
        <begin position="161"/>
        <end position="168"/>
    </location>
</feature>
<feature type="strand" evidence="15">
    <location>
        <begin position="174"/>
        <end position="176"/>
    </location>
</feature>
<feature type="helix" evidence="15">
    <location>
        <begin position="178"/>
        <end position="181"/>
    </location>
</feature>
<feature type="strand" evidence="15">
    <location>
        <begin position="185"/>
        <end position="188"/>
    </location>
</feature>
<feature type="helix" evidence="15">
    <location>
        <begin position="201"/>
        <end position="203"/>
    </location>
</feature>
<feature type="strand" evidence="15">
    <location>
        <begin position="205"/>
        <end position="208"/>
    </location>
</feature>
<feature type="strand" evidence="15">
    <location>
        <begin position="213"/>
        <end position="216"/>
    </location>
</feature>
<feature type="strand" evidence="15">
    <location>
        <begin position="219"/>
        <end position="225"/>
    </location>
</feature>
<feature type="helix" evidence="15">
    <location>
        <begin position="227"/>
        <end position="229"/>
    </location>
</feature>
<feature type="helix" evidence="15">
    <location>
        <begin position="231"/>
        <end position="239"/>
    </location>
</feature>
<feature type="helix" evidence="15">
    <location>
        <begin position="248"/>
        <end position="274"/>
    </location>
</feature>
<feature type="strand" evidence="15">
    <location>
        <begin position="278"/>
        <end position="280"/>
    </location>
</feature>
<feature type="turn" evidence="15">
    <location>
        <begin position="288"/>
        <end position="290"/>
    </location>
</feature>
<feature type="helix" evidence="15">
    <location>
        <begin position="291"/>
        <end position="306"/>
    </location>
</feature>
<feature type="helix" evidence="15">
    <location>
        <begin position="311"/>
        <end position="327"/>
    </location>
</feature>
<feature type="turn" evidence="15">
    <location>
        <begin position="328"/>
        <end position="330"/>
    </location>
</feature>
<feature type="strand" evidence="15">
    <location>
        <begin position="331"/>
        <end position="335"/>
    </location>
</feature>
<feature type="helix" evidence="15">
    <location>
        <begin position="338"/>
        <end position="341"/>
    </location>
</feature>
<feature type="strand" evidence="15">
    <location>
        <begin position="347"/>
        <end position="350"/>
    </location>
</feature>
<feature type="helix" evidence="15">
    <location>
        <begin position="352"/>
        <end position="356"/>
    </location>
</feature>
<feature type="strand" evidence="15">
    <location>
        <begin position="362"/>
        <end position="373"/>
    </location>
</feature>
<feature type="strand" evidence="15">
    <location>
        <begin position="376"/>
        <end position="384"/>
    </location>
</feature>
<feature type="strand" evidence="15">
    <location>
        <begin position="387"/>
        <end position="391"/>
    </location>
</feature>
<feature type="strand" evidence="15">
    <location>
        <begin position="395"/>
        <end position="401"/>
    </location>
</feature>
<feature type="helix" evidence="15">
    <location>
        <begin position="404"/>
        <end position="406"/>
    </location>
</feature>
<feature type="helix" evidence="15">
    <location>
        <begin position="408"/>
        <end position="419"/>
    </location>
</feature>
<feature type="strand" evidence="15">
    <location>
        <begin position="424"/>
        <end position="427"/>
    </location>
</feature>
<feature type="turn" evidence="15">
    <location>
        <begin position="429"/>
        <end position="431"/>
    </location>
</feature>
<feature type="strand" evidence="15">
    <location>
        <begin position="433"/>
        <end position="438"/>
    </location>
</feature>
<feature type="helix" evidence="15">
    <location>
        <begin position="440"/>
        <end position="452"/>
    </location>
</feature>
<feature type="helix" evidence="15">
    <location>
        <begin position="466"/>
        <end position="478"/>
    </location>
</feature>
<feature type="strand" evidence="15">
    <location>
        <begin position="479"/>
        <end position="488"/>
    </location>
</feature>
<feature type="turn" evidence="15">
    <location>
        <begin position="489"/>
        <end position="492"/>
    </location>
</feature>
<feature type="strand" evidence="15">
    <location>
        <begin position="493"/>
        <end position="503"/>
    </location>
</feature>
<feature type="turn" evidence="15">
    <location>
        <begin position="504"/>
        <end position="506"/>
    </location>
</feature>
<feature type="strand" evidence="15">
    <location>
        <begin position="510"/>
        <end position="515"/>
    </location>
</feature>
<feature type="helix" evidence="15">
    <location>
        <begin position="517"/>
        <end position="521"/>
    </location>
</feature>
<feature type="strand" evidence="15">
    <location>
        <begin position="524"/>
        <end position="529"/>
    </location>
</feature>
<feature type="strand" evidence="15">
    <location>
        <begin position="532"/>
        <end position="535"/>
    </location>
</feature>
<feature type="helix" evidence="15">
    <location>
        <begin position="538"/>
        <end position="552"/>
    </location>
</feature>
<feature type="strand" evidence="15">
    <location>
        <begin position="553"/>
        <end position="556"/>
    </location>
</feature>
<feature type="strand" evidence="15">
    <location>
        <begin position="559"/>
        <end position="568"/>
    </location>
</feature>
<feature type="helix" evidence="15">
    <location>
        <begin position="580"/>
        <end position="582"/>
    </location>
</feature>
<feature type="helix" evidence="15">
    <location>
        <begin position="583"/>
        <end position="586"/>
    </location>
</feature>
<feature type="strand" evidence="15">
    <location>
        <begin position="589"/>
        <end position="599"/>
    </location>
</feature>
<feature type="helix" evidence="15">
    <location>
        <begin position="606"/>
        <end position="615"/>
    </location>
</feature>
<feature type="strand" evidence="15">
    <location>
        <begin position="619"/>
        <end position="623"/>
    </location>
</feature>
<feature type="helix" evidence="15">
    <location>
        <begin position="628"/>
        <end position="637"/>
    </location>
</feature>
<feature type="turn" evidence="15">
    <location>
        <begin position="648"/>
        <end position="650"/>
    </location>
</feature>
<feature type="strand" evidence="15">
    <location>
        <begin position="651"/>
        <end position="653"/>
    </location>
</feature>
<feature type="helix" evidence="15">
    <location>
        <begin position="654"/>
        <end position="659"/>
    </location>
</feature>
<feature type="helix" evidence="15">
    <location>
        <begin position="662"/>
        <end position="671"/>
    </location>
</feature>
<feature type="strand" evidence="15">
    <location>
        <begin position="674"/>
        <end position="677"/>
    </location>
</feature>
<feature type="helix" evidence="15">
    <location>
        <begin position="680"/>
        <end position="692"/>
    </location>
</feature>
<feature type="strand" evidence="15">
    <location>
        <begin position="697"/>
        <end position="701"/>
    </location>
</feature>
<feature type="helix" evidence="15">
    <location>
        <begin position="707"/>
        <end position="712"/>
    </location>
</feature>
<feature type="strand" evidence="15">
    <location>
        <begin position="713"/>
        <end position="719"/>
    </location>
</feature>
<feature type="helix" evidence="15">
    <location>
        <begin position="724"/>
        <end position="728"/>
    </location>
</feature>
<feature type="strand" evidence="15">
    <location>
        <begin position="730"/>
        <end position="736"/>
    </location>
</feature>
<feature type="helix" evidence="15">
    <location>
        <begin position="740"/>
        <end position="780"/>
    </location>
</feature>
<feature type="helix" evidence="15">
    <location>
        <begin position="788"/>
        <end position="806"/>
    </location>
</feature>
<feature type="helix" evidence="15">
    <location>
        <begin position="815"/>
        <end position="817"/>
    </location>
</feature>
<feature type="helix" evidence="15">
    <location>
        <begin position="830"/>
        <end position="856"/>
    </location>
</feature>
<feature type="strand" evidence="15">
    <location>
        <begin position="859"/>
        <end position="861"/>
    </location>
</feature>
<feature type="helix" evidence="15">
    <location>
        <begin position="866"/>
        <end position="870"/>
    </location>
</feature>
<feature type="helix" evidence="15">
    <location>
        <begin position="872"/>
        <end position="874"/>
    </location>
</feature>
<feature type="helix" evidence="15">
    <location>
        <begin position="889"/>
        <end position="891"/>
    </location>
</feature>
<feature type="helix" evidence="15">
    <location>
        <begin position="893"/>
        <end position="913"/>
    </location>
</feature>
<feature type="strand" evidence="15">
    <location>
        <begin position="915"/>
        <end position="919"/>
    </location>
</feature>
<feature type="strand" evidence="15">
    <location>
        <begin position="921"/>
        <end position="924"/>
    </location>
</feature>
<feature type="helix" evidence="15">
    <location>
        <begin position="926"/>
        <end position="928"/>
    </location>
</feature>
<feature type="helix" evidence="15">
    <location>
        <begin position="930"/>
        <end position="948"/>
    </location>
</feature>
<feature type="helix" evidence="15">
    <location>
        <begin position="952"/>
        <end position="956"/>
    </location>
</feature>
<feature type="helix" evidence="15">
    <location>
        <begin position="964"/>
        <end position="973"/>
    </location>
</feature>
<feature type="helix" evidence="15">
    <location>
        <begin position="975"/>
        <end position="989"/>
    </location>
</feature>
<comment type="function">
    <text evidence="3 5">This magnesium-dependent enzyme catalyzes the hydrolysis of ATP coupled with the translocation of calcium from the cytosol to the sarcoplasmic reticulum lumen. Involved in autophagy in response to starvation. Upon interaction with VMP1 and activation, controls ER-isolation membrane contacts for autophagosome formation. Also modulates ER contacts with lipid droplets, mitochondria and endosomes (By similarity). In coordination with FLVCR2 mediates heme-stimulated switching from mitochondrial ATP synthesis to thermogenesis (By similarity).</text>
</comment>
<comment type="function">
    <molecule>Isoform 2</molecule>
    <text evidence="3">Involved in the regulation of the contraction/relaxation cycle. Acts as a regulator of TNFSF11-mediated Ca(2+) signaling pathways via its interaction with TMEM64 which is critical for the TNFSF11-induced CREB1 activation and mitochondrial ROS generation necessary for proper osteoclast generation. Association between TMEM64 and SERCA2 in the ER leads to cytosolic Ca(2+) spiking for activation of NFATC1 and production of mitochondrial ROS, thereby triggering Ca(2+) signaling cascades that promote osteoclast differentiation and activation.</text>
</comment>
<comment type="catalytic activity">
    <reaction evidence="9">
        <text>Ca(2+)(in) + ATP + H2O = Ca(2+)(out) + ADP + phosphate + H(+)</text>
        <dbReference type="Rhea" id="RHEA:18105"/>
        <dbReference type="ChEBI" id="CHEBI:15377"/>
        <dbReference type="ChEBI" id="CHEBI:15378"/>
        <dbReference type="ChEBI" id="CHEBI:29108"/>
        <dbReference type="ChEBI" id="CHEBI:30616"/>
        <dbReference type="ChEBI" id="CHEBI:43474"/>
        <dbReference type="ChEBI" id="CHEBI:456216"/>
        <dbReference type="EC" id="7.2.2.10"/>
    </reaction>
    <physiologicalReaction direction="left-to-right" evidence="12">
        <dbReference type="Rhea" id="RHEA:18106"/>
    </physiologicalReaction>
</comment>
<comment type="cofactor">
    <cofactor evidence="9">
        <name>Mg(2+)</name>
        <dbReference type="ChEBI" id="CHEBI:18420"/>
    </cofactor>
</comment>
<comment type="activity regulation">
    <text evidence="2 3 4 5 7">Has different conformational states with differential Ca2+ affinity. The E1 conformational state (active form) shows high Ca(2+) affinity, while the E2 state exhibits low Ca(2+) affinity. Binding of ATP allosterically increases its affinity for subsequent binding of Ca2+. Reversibly inhibited by phospholamban (PLN) at low calcium concentrations. PLN inhibits ATP2A2 Ca(2+) affinity by disrupting its allosteric activation by ATP. Inhibited by sarcolipin (SLN) and myoregulin (MRLN). The inhibition is blocked by VMP1. Enhanced by STRIT1/DWORF; STRIT1 increases activity by displacing sarcolipin (SLN), phospholamban (PLN) and myoregulin (MRLN). Stabilizes SERCA2 in its E2 state.</text>
</comment>
<comment type="subunit">
    <text evidence="3 4 5 7">Interacts with sarcolipin (SLN); the interaction inhibits ATP2A2 Ca(2+) affinity. Interacts with phospholamban (PLN); the interaction inhibits ATP2A2 Ca(2+) affinity (By similarity). Interacts with myoregulin (MRLN) (By similarity). Interacts with ARLN and ERLN; the interactions inhibit ATP2A2 Ca(2+) affinity (By similarity). Interacts with STRIT1/DWORF; the interaction results in activation of ATP2A2 (By similarity). Interacts with the monomeric forms of SLN, PLN, ARLN, ERLN and STRI1/DWORF (By similarity). Interacts with HAX1 (By similarity). Interacts with S100A8 and S100A9 (By similarity). Interacts with SLC35G1 and STIM1. Interacts with TMEM203 (By similarity). Interacts with TMEM64 and PDIA3 (By similarity). Interacts with TMX1 (By similarity). Interacts with TMX2 (By similarity). Interacts with VMP1; VMP1 competes with PLN and SLN to prevent them from forming an inhibitory complex with ATP2A2. Interacts with ULK1 (By similarity). Interacts with S100A1 in a Ca(2+)-dependent manner (By similarity). Interacts with TUNAR (By similarity). Interacts with FLVCR2; this interaction occurs in the absence of heme and promotes ATP2A2 proteasomal degradation; this complex is dissociated upon heme binding. Interacts with FNIP1.</text>
</comment>
<comment type="subunit">
    <molecule>Isoform 1</molecule>
    <text evidence="5">Interacts with TRAM2 (via C-terminus).</text>
</comment>
<comment type="interaction">
    <interactant intactId="EBI-8004986">
        <id>P11607</id>
    </interactant>
    <interactant intactId="EBI-355947">
        <id>P27824</id>
        <label>CANX</label>
    </interactant>
    <organismsDiffer>true</organismsDiffer>
    <experiments>2</experiments>
</comment>
<comment type="interaction">
    <interactant intactId="EBI-8004986">
        <id>P11607</id>
    </interactant>
    <interactant intactId="EBI-2624456">
        <id>P41143</id>
        <label>OPRD1</label>
    </interactant>
    <organismsDiffer>true</organismsDiffer>
    <experiments>2</experiments>
</comment>
<comment type="subcellular location">
    <subcellularLocation>
        <location evidence="3">Endoplasmic reticulum membrane</location>
        <topology evidence="9">Multi-pass membrane protein</topology>
    </subcellularLocation>
    <subcellularLocation>
        <location evidence="9">Sarcoplasmic reticulum membrane</location>
        <topology evidence="9">Multi-pass membrane protein</topology>
    </subcellularLocation>
    <text evidence="3">Colocalizes with FLVCR2 at the mitochondrial-ER contact junction.</text>
</comment>
<comment type="alternative products">
    <event type="alternative splicing"/>
    <isoform>
        <id>P11607-1</id>
        <name>1</name>
        <name>ATP2A2B</name>
        <name>SERCA2b</name>
        <sequence type="displayed"/>
    </isoform>
    <isoform>
        <id>P11607-2</id>
        <name>2</name>
        <name>ATP2A2A</name>
        <name>SERCA2a</name>
        <sequence type="described" ref="VSP_000360"/>
    </isoform>
</comment>
<comment type="tissue specificity">
    <molecule>Isoform 2</molecule>
    <text evidence="8 9">Detected in heart left ventricle (at protein level) (PubMed:30777856). Isoform 2 is highly expressed in heart and slow twitch skeletal muscle. Isoform 1 is widely expressed.</text>
</comment>
<comment type="domain">
    <text evidence="4">Ca(2+) and ATP binding cause major rearrangements of the cytoplasmic and transmembrane domains. According to the E1-E2 model, Ca(2+) binding to the cytosolic domain of the pump in the high-affinity E1 conformation is followed by the ATP-dependent phosphorylation of the active site Asp, giving rise to E1P. A conformational change of the phosphoenzyme gives rise to the low-affinity E2P state that exposes the Ca(2+) ions to the lumenal side and promotes Ca(2+) release. Dephosphorylation of the active site Asp mediates the subsequent return to the E1 conformation.</text>
</comment>
<comment type="domain">
    <text evidence="4">PLN and SLN both have a single transmembrane helix; both occupy a similar binding site that is situated between the ATP2A2 transmembrane helices.</text>
</comment>
<comment type="PTM">
    <text evidence="5">Nitrated under oxidative stress. Nitration on the two tyrosine residues inhibits catalytic activity.</text>
</comment>
<comment type="PTM">
    <text evidence="3">Serotonylated on Gln residues by TGM2 in response to hypoxia, leading to its inactivation.</text>
</comment>
<comment type="similarity">
    <text evidence="11">Belongs to the cation transport ATPase (P-type) (TC 3.A.3) family. Type IIA subfamily.</text>
</comment>
<protein>
    <recommendedName>
        <fullName>Sarcoplasmic/endoplasmic reticulum calcium ATPase 2</fullName>
        <shortName>SERCA2</shortName>
        <shortName>SR Ca(2+)-ATPase 2</shortName>
        <ecNumber evidence="9">7.2.2.10</ecNumber>
    </recommendedName>
    <alternativeName>
        <fullName>Calcium pump 2</fullName>
    </alternativeName>
    <alternativeName>
        <fullName>Calcium-transporting ATPase sarcoplasmic reticulum type, slow twitch skeletal muscle isoform</fullName>
    </alternativeName>
    <alternativeName>
        <fullName>Endoplasmic reticulum class 1/2 Ca(2+) ATPase</fullName>
    </alternativeName>
</protein>
<gene>
    <name type="primary">ATP2A2</name>
</gene>
<name>AT2A2_PIG</name>
<reference key="1">
    <citation type="journal article" date="1989" name="Biochem. J.">
        <title>Evidence for two isoforms of the endoplasmic-reticulum Ca2+ pump in pig smooth muscle.</title>
        <authorList>
            <person name="Eggermont J.A."/>
            <person name="Wuytack F."/>
            <person name="de Jaegere S."/>
            <person name="Nelles L."/>
            <person name="Casteels R."/>
        </authorList>
    </citation>
    <scope>NUCLEOTIDE SEQUENCE [MRNA] (ISOFORMS 1 AND 2)</scope>
    <source>
        <tissue>Stomach smooth muscle</tissue>
    </source>
</reference>
<reference key="2">
    <citation type="journal article" date="1991" name="Biochim. Biophys. Acta">
        <title>Characterization of the 3' end of the pig sarcoplasmic/endoplasmic-reticulum Ca2+ pump gene 2.</title>
        <authorList>
            <person name="Eggermont J.A."/>
            <person name="Wuytack F."/>
            <person name="Casteels R."/>
        </authorList>
    </citation>
    <scope>NUCLEOTIDE SEQUENCE [GENOMIC DNA] OF 842-1042 (ISOFORMS 1 AND 2)</scope>
</reference>
<reference key="3">
    <citation type="journal article" date="1990" name="Biochem. J.">
        <title>Characterization of the mRNAs encoding the gene 2 sarcoplasmic/endoplasmic-reticulum Ca2+ pump in pig smooth muscle.</title>
        <authorList>
            <person name="Eggermont J.A."/>
            <person name="Wuytack F."/>
            <person name="Casteels R."/>
        </authorList>
    </citation>
    <scope>TISSUE SPECIFICITY</scope>
    <scope>ALTERNATIVE SPLICING</scope>
</reference>
<reference evidence="13 14" key="4">
    <citation type="journal article" date="2019" name="EMBO J.">
        <title>Structures of the heart specific SERCA2a Ca2+-ATPase.</title>
        <authorList>
            <person name="Sitsel A."/>
            <person name="De Raeymaecker J."/>
            <person name="Drachmann N.D."/>
            <person name="Derua R."/>
            <person name="Smaardijk S."/>
            <person name="Andersen J.L."/>
            <person name="Vandecaetsbeek I."/>
            <person name="Chen J."/>
            <person name="De Maeyer M."/>
            <person name="Waelkens E."/>
            <person name="Olesen C."/>
            <person name="Vangheluwe P."/>
            <person name="Nissen P."/>
        </authorList>
    </citation>
    <scope>X-RAY CRYSTALLOGRAPHY (3.30 ANGSTROMS) OF 1-993 IN COMPLEXES WITH CALCIUM IONS AND ATP ANALOGS</scope>
    <scope>CATALYTIC ACTIVITY</scope>
    <scope>SUBCELLULAR LOCATION</scope>
    <scope>TISSUE SPECIFICITY</scope>
    <scope>TOPOLOGY</scope>
    <scope>DISULFIDE BOND</scope>
</reference>
<accession>P11607</accession>
<accession>P11606</accession>
<accession>P79426</accession>
<accession>P79427</accession>
<proteinExistence type="evidence at protein level"/>
<dbReference type="EC" id="7.2.2.10" evidence="9"/>
<dbReference type="EMBL" id="X15074">
    <property type="protein sequence ID" value="CAA33170.1"/>
    <property type="molecule type" value="mRNA"/>
</dbReference>
<dbReference type="EMBL" id="X15073">
    <property type="protein sequence ID" value="CAA33169.1"/>
    <property type="molecule type" value="mRNA"/>
</dbReference>
<dbReference type="EMBL" id="X53754">
    <property type="protein sequence ID" value="CAA37783.1"/>
    <property type="molecule type" value="Genomic_DNA"/>
</dbReference>
<dbReference type="EMBL" id="X53754">
    <property type="protein sequence ID" value="CAA37784.1"/>
    <property type="molecule type" value="Genomic_DNA"/>
</dbReference>
<dbReference type="PIR" id="S04651">
    <property type="entry name" value="S04651"/>
</dbReference>
<dbReference type="PIR" id="S04652">
    <property type="entry name" value="S04652"/>
</dbReference>
<dbReference type="RefSeq" id="NP_999030.1">
    <molecule id="P11607-1"/>
    <property type="nucleotide sequence ID" value="NM_213865.1"/>
</dbReference>
<dbReference type="RefSeq" id="XP_020927734.1">
    <molecule id="P11607-2"/>
    <property type="nucleotide sequence ID" value="XM_021072075.1"/>
</dbReference>
<dbReference type="PDB" id="5MPM">
    <property type="method" value="X-ray"/>
    <property type="resolution" value="3.30 A"/>
    <property type="chains" value="A=1-993"/>
</dbReference>
<dbReference type="PDB" id="6HXB">
    <property type="method" value="X-ray"/>
    <property type="resolution" value="4.00 A"/>
    <property type="chains" value="A=1-993"/>
</dbReference>
<dbReference type="PDBsum" id="5MPM"/>
<dbReference type="PDBsum" id="6HXB"/>
<dbReference type="BMRB" id="P11607"/>
<dbReference type="SMR" id="P11607"/>
<dbReference type="BioGRID" id="1149018">
    <property type="interactions" value="2"/>
</dbReference>
<dbReference type="FunCoup" id="P11607">
    <property type="interactions" value="1828"/>
</dbReference>
<dbReference type="IntAct" id="P11607">
    <property type="interactions" value="2"/>
</dbReference>
<dbReference type="MINT" id="P11607"/>
<dbReference type="STRING" id="9823.ENSSSCP00000037774"/>
<dbReference type="PaxDb" id="9823-ENSSSCP00000019348"/>
<dbReference type="PeptideAtlas" id="P11607"/>
<dbReference type="Ensembl" id="ENSSSCT00000045994.3">
    <molecule id="P11607-1"/>
    <property type="protein sequence ID" value="ENSSSCP00000037774.1"/>
    <property type="gene ID" value="ENSSSCG00000034386.3"/>
</dbReference>
<dbReference type="Ensembl" id="ENSSSCT00015008195.1">
    <molecule id="P11607-1"/>
    <property type="protein sequence ID" value="ENSSSCP00015003301.1"/>
    <property type="gene ID" value="ENSSSCG00015006148.1"/>
</dbReference>
<dbReference type="Ensembl" id="ENSSSCT00025020640.1">
    <molecule id="P11607-1"/>
    <property type="protein sequence ID" value="ENSSSCP00025008478.1"/>
    <property type="gene ID" value="ENSSSCG00025015273.1"/>
</dbReference>
<dbReference type="Ensembl" id="ENSSSCT00030063269.1">
    <molecule id="P11607-1"/>
    <property type="protein sequence ID" value="ENSSSCP00030028946.1"/>
    <property type="gene ID" value="ENSSSCG00030045278.1"/>
</dbReference>
<dbReference type="Ensembl" id="ENSSSCT00035043363.1">
    <molecule id="P11607-1"/>
    <property type="protein sequence ID" value="ENSSSCP00035017345.1"/>
    <property type="gene ID" value="ENSSSCG00035032729.1"/>
</dbReference>
<dbReference type="Ensembl" id="ENSSSCT00040006183.1">
    <molecule id="P11607-1"/>
    <property type="protein sequence ID" value="ENSSSCP00040002459.1"/>
    <property type="gene ID" value="ENSSSCG00040004634.1"/>
</dbReference>
<dbReference type="Ensembl" id="ENSSSCT00045030557.1">
    <molecule id="P11607-1"/>
    <property type="protein sequence ID" value="ENSSSCP00045021173.1"/>
    <property type="gene ID" value="ENSSSCG00045017876.1"/>
</dbReference>
<dbReference type="Ensembl" id="ENSSSCT00055035587.1">
    <molecule id="P11607-1"/>
    <property type="protein sequence ID" value="ENSSSCP00055028270.1"/>
    <property type="gene ID" value="ENSSSCG00055017945.1"/>
</dbReference>
<dbReference type="Ensembl" id="ENSSSCT00060108150.1">
    <molecule id="P11607-1"/>
    <property type="protein sequence ID" value="ENSSSCP00060048139.1"/>
    <property type="gene ID" value="ENSSSCG00060078303.1"/>
</dbReference>
<dbReference type="Ensembl" id="ENSSSCT00065011829.1">
    <molecule id="P11607-1"/>
    <property type="protein sequence ID" value="ENSSSCP00065004850.1"/>
    <property type="gene ID" value="ENSSSCG00065008853.1"/>
</dbReference>
<dbReference type="Ensembl" id="ENSSSCT00070027936.1">
    <molecule id="P11607-1"/>
    <property type="protein sequence ID" value="ENSSSCP00070023256.1"/>
    <property type="gene ID" value="ENSSSCG00070014188.1"/>
</dbReference>
<dbReference type="Ensembl" id="ENSSSCT00090028507">
    <molecule id="P11607-1"/>
    <property type="protein sequence ID" value="ENSSSCP00090017574"/>
    <property type="gene ID" value="ENSSSCG00090016180"/>
</dbReference>
<dbReference type="Ensembl" id="ENSSSCT00105025527">
    <molecule id="P11607-1"/>
    <property type="protein sequence ID" value="ENSSSCP00105018109"/>
    <property type="gene ID" value="ENSSSCG00105012959"/>
</dbReference>
<dbReference type="Ensembl" id="ENSSSCT00110072488">
    <molecule id="P11607-1"/>
    <property type="protein sequence ID" value="ENSSSCP00110051178"/>
    <property type="gene ID" value="ENSSSCG00110038022"/>
</dbReference>
<dbReference type="Ensembl" id="ENSSSCT00115015182">
    <molecule id="P11607-1"/>
    <property type="protein sequence ID" value="ENSSSCP00115014333"/>
    <property type="gene ID" value="ENSSSCG00115008546"/>
</dbReference>
<dbReference type="Ensembl" id="ENSSSCT00130026157">
    <molecule id="P11607-1"/>
    <property type="protein sequence ID" value="ENSSSCP00130020757"/>
    <property type="gene ID" value="ENSSSCG00130015206"/>
</dbReference>
<dbReference type="GeneID" id="396875"/>
<dbReference type="KEGG" id="ssc:396875"/>
<dbReference type="CTD" id="488"/>
<dbReference type="GeneTree" id="ENSGT00940000159986"/>
<dbReference type="InParanoid" id="P11607"/>
<dbReference type="OMA" id="PLWNNMM"/>
<dbReference type="OrthoDB" id="3352408at2759"/>
<dbReference type="Reactome" id="R-SSC-418359">
    <property type="pathway name" value="Reduction of cytosolic Ca++ levels"/>
</dbReference>
<dbReference type="Reactome" id="R-SSC-5578775">
    <property type="pathway name" value="Ion homeostasis"/>
</dbReference>
<dbReference type="Reactome" id="R-SSC-936837">
    <property type="pathway name" value="Ion transport by P-type ATPases"/>
</dbReference>
<dbReference type="Proteomes" id="UP000008227">
    <property type="component" value="Chromosome 14"/>
</dbReference>
<dbReference type="Proteomes" id="UP000314985">
    <property type="component" value="Chromosome 14"/>
</dbReference>
<dbReference type="Proteomes" id="UP000694570">
    <property type="component" value="Unplaced"/>
</dbReference>
<dbReference type="Proteomes" id="UP000694571">
    <property type="component" value="Unplaced"/>
</dbReference>
<dbReference type="Proteomes" id="UP000694720">
    <property type="component" value="Unplaced"/>
</dbReference>
<dbReference type="Proteomes" id="UP000694722">
    <property type="component" value="Unplaced"/>
</dbReference>
<dbReference type="Proteomes" id="UP000694723">
    <property type="component" value="Unplaced"/>
</dbReference>
<dbReference type="Proteomes" id="UP000694724">
    <property type="component" value="Unplaced"/>
</dbReference>
<dbReference type="Proteomes" id="UP000694725">
    <property type="component" value="Unplaced"/>
</dbReference>
<dbReference type="Proteomes" id="UP000694726">
    <property type="component" value="Unplaced"/>
</dbReference>
<dbReference type="Proteomes" id="UP000694727">
    <property type="component" value="Unplaced"/>
</dbReference>
<dbReference type="Proteomes" id="UP000694728">
    <property type="component" value="Unplaced"/>
</dbReference>
<dbReference type="Bgee" id="ENSSSCG00000034386">
    <property type="expression patterns" value="Expressed in heart left ventricle and 42 other cell types or tissues"/>
</dbReference>
<dbReference type="ExpressionAtlas" id="P11607">
    <property type="expression patterns" value="baseline and differential"/>
</dbReference>
<dbReference type="GO" id="GO:0016020">
    <property type="term" value="C:membrane"/>
    <property type="evidence" value="ECO:0000318"/>
    <property type="project" value="GO_Central"/>
</dbReference>
<dbReference type="GO" id="GO:0097470">
    <property type="term" value="C:ribbon synapse"/>
    <property type="evidence" value="ECO:0007669"/>
    <property type="project" value="Ensembl"/>
</dbReference>
<dbReference type="GO" id="GO:0033017">
    <property type="term" value="C:sarcoplasmic reticulum membrane"/>
    <property type="evidence" value="ECO:0007669"/>
    <property type="project" value="UniProtKB-SubCell"/>
</dbReference>
<dbReference type="GO" id="GO:0005524">
    <property type="term" value="F:ATP binding"/>
    <property type="evidence" value="ECO:0007669"/>
    <property type="project" value="UniProtKB-KW"/>
</dbReference>
<dbReference type="GO" id="GO:0016887">
    <property type="term" value="F:ATP hydrolysis activity"/>
    <property type="evidence" value="ECO:0007669"/>
    <property type="project" value="InterPro"/>
</dbReference>
<dbReference type="GO" id="GO:0005246">
    <property type="term" value="F:calcium channel regulator activity"/>
    <property type="evidence" value="ECO:0007669"/>
    <property type="project" value="Ensembl"/>
</dbReference>
<dbReference type="GO" id="GO:0005509">
    <property type="term" value="F:calcium ion binding"/>
    <property type="evidence" value="ECO:0007669"/>
    <property type="project" value="Ensembl"/>
</dbReference>
<dbReference type="GO" id="GO:0019899">
    <property type="term" value="F:enzyme binding"/>
    <property type="evidence" value="ECO:0007669"/>
    <property type="project" value="Ensembl"/>
</dbReference>
<dbReference type="GO" id="GO:0106222">
    <property type="term" value="F:lncRNA binding"/>
    <property type="evidence" value="ECO:0007669"/>
    <property type="project" value="Ensembl"/>
</dbReference>
<dbReference type="GO" id="GO:0086039">
    <property type="term" value="F:P-type calcium transporter activity involved in regulation of cardiac muscle cell membrane potential"/>
    <property type="evidence" value="ECO:0000250"/>
    <property type="project" value="UniProtKB"/>
</dbReference>
<dbReference type="GO" id="GO:0044548">
    <property type="term" value="F:S100 protein binding"/>
    <property type="evidence" value="ECO:0007669"/>
    <property type="project" value="Ensembl"/>
</dbReference>
<dbReference type="GO" id="GO:0044325">
    <property type="term" value="F:transmembrane transporter binding"/>
    <property type="evidence" value="ECO:0007669"/>
    <property type="project" value="Ensembl"/>
</dbReference>
<dbReference type="GO" id="GO:0000045">
    <property type="term" value="P:autophagosome assembly"/>
    <property type="evidence" value="ECO:0000250"/>
    <property type="project" value="UniProtKB"/>
</dbReference>
<dbReference type="GO" id="GO:0016240">
    <property type="term" value="P:autophagosome membrane docking"/>
    <property type="evidence" value="ECO:0000250"/>
    <property type="project" value="UniProtKB"/>
</dbReference>
<dbReference type="GO" id="GO:1990036">
    <property type="term" value="P:calcium ion import into sarcoplasmic reticulum"/>
    <property type="evidence" value="ECO:0007669"/>
    <property type="project" value="Ensembl"/>
</dbReference>
<dbReference type="GO" id="GO:0070588">
    <property type="term" value="P:calcium ion transmembrane transport"/>
    <property type="evidence" value="ECO:0000250"/>
    <property type="project" value="UniProtKB"/>
</dbReference>
<dbReference type="GO" id="GO:1903515">
    <property type="term" value="P:calcium ion transport from cytosol to endoplasmic reticulum"/>
    <property type="evidence" value="ECO:0007669"/>
    <property type="project" value="Ensembl"/>
</dbReference>
<dbReference type="GO" id="GO:0014898">
    <property type="term" value="P:cardiac muscle hypertrophy in response to stress"/>
    <property type="evidence" value="ECO:0007669"/>
    <property type="project" value="Ensembl"/>
</dbReference>
<dbReference type="GO" id="GO:0034599">
    <property type="term" value="P:cellular response to oxidative stress"/>
    <property type="evidence" value="ECO:0007669"/>
    <property type="project" value="Ensembl"/>
</dbReference>
<dbReference type="GO" id="GO:0006984">
    <property type="term" value="P:ER-nucleus signaling pathway"/>
    <property type="evidence" value="ECO:0007669"/>
    <property type="project" value="Ensembl"/>
</dbReference>
<dbReference type="GO" id="GO:0006874">
    <property type="term" value="P:intracellular calcium ion homeostasis"/>
    <property type="evidence" value="ECO:0000318"/>
    <property type="project" value="GO_Central"/>
</dbReference>
<dbReference type="GO" id="GO:1990456">
    <property type="term" value="P:mitochondrion-endoplasmic reticulum membrane tethering"/>
    <property type="evidence" value="ECO:0000250"/>
    <property type="project" value="UniProtKB"/>
</dbReference>
<dbReference type="GO" id="GO:0045822">
    <property type="term" value="P:negative regulation of heart contraction"/>
    <property type="evidence" value="ECO:0007669"/>
    <property type="project" value="Ensembl"/>
</dbReference>
<dbReference type="GO" id="GO:0070050">
    <property type="term" value="P:neuron cellular homeostasis"/>
    <property type="evidence" value="ECO:0007669"/>
    <property type="project" value="Ensembl"/>
</dbReference>
<dbReference type="GO" id="GO:0140056">
    <property type="term" value="P:organelle localization by membrane tethering"/>
    <property type="evidence" value="ECO:0000250"/>
    <property type="project" value="UniProtKB"/>
</dbReference>
<dbReference type="GO" id="GO:0010666">
    <property type="term" value="P:positive regulation of cardiac muscle cell apoptotic process"/>
    <property type="evidence" value="ECO:0007669"/>
    <property type="project" value="Ensembl"/>
</dbReference>
<dbReference type="GO" id="GO:0032470">
    <property type="term" value="P:positive regulation of endoplasmic reticulum calcium ion concentration"/>
    <property type="evidence" value="ECO:0007669"/>
    <property type="project" value="Ensembl"/>
</dbReference>
<dbReference type="GO" id="GO:1903233">
    <property type="term" value="P:regulation of calcium ion-dependent exocytosis of neurotransmitter"/>
    <property type="evidence" value="ECO:0007669"/>
    <property type="project" value="Ensembl"/>
</dbReference>
<dbReference type="GO" id="GO:0010882">
    <property type="term" value="P:regulation of cardiac muscle contraction by calcium ion signaling"/>
    <property type="evidence" value="ECO:0000318"/>
    <property type="project" value="GO_Central"/>
</dbReference>
<dbReference type="GO" id="GO:0002026">
    <property type="term" value="P:regulation of the force of heart contraction"/>
    <property type="evidence" value="ECO:0007669"/>
    <property type="project" value="Ensembl"/>
</dbReference>
<dbReference type="GO" id="GO:0033292">
    <property type="term" value="P:T-tubule organization"/>
    <property type="evidence" value="ECO:0007669"/>
    <property type="project" value="Ensembl"/>
</dbReference>
<dbReference type="GO" id="GO:0014883">
    <property type="term" value="P:transition between fast and slow fiber"/>
    <property type="evidence" value="ECO:0007669"/>
    <property type="project" value="Ensembl"/>
</dbReference>
<dbReference type="CDD" id="cd02083">
    <property type="entry name" value="P-type_ATPase_SERCA"/>
    <property type="match status" value="1"/>
</dbReference>
<dbReference type="FunFam" id="2.70.150.10:FF:000143">
    <property type="entry name" value="Calcium-transporting ATPase"/>
    <property type="match status" value="1"/>
</dbReference>
<dbReference type="FunFam" id="3.40.1110.10:FF:000003">
    <property type="entry name" value="Calcium-transporting ATPase"/>
    <property type="match status" value="1"/>
</dbReference>
<dbReference type="FunFam" id="3.40.50.1000:FF:000005">
    <property type="entry name" value="Calcium-transporting ATPase 1"/>
    <property type="match status" value="1"/>
</dbReference>
<dbReference type="FunFam" id="1.20.1110.10:FF:000065">
    <property type="entry name" value="Sarcoplasmic/endoplasmic reticulum calcium ATPase 1"/>
    <property type="match status" value="3"/>
</dbReference>
<dbReference type="Gene3D" id="3.40.1110.10">
    <property type="entry name" value="Calcium-transporting ATPase, cytoplasmic domain N"/>
    <property type="match status" value="1"/>
</dbReference>
<dbReference type="Gene3D" id="2.70.150.10">
    <property type="entry name" value="Calcium-transporting ATPase, cytoplasmic transduction domain A"/>
    <property type="match status" value="1"/>
</dbReference>
<dbReference type="Gene3D" id="1.20.1110.10">
    <property type="entry name" value="Calcium-transporting ATPase, transmembrane domain"/>
    <property type="match status" value="1"/>
</dbReference>
<dbReference type="Gene3D" id="3.40.50.1000">
    <property type="entry name" value="HAD superfamily/HAD-like"/>
    <property type="match status" value="1"/>
</dbReference>
<dbReference type="InterPro" id="IPR006068">
    <property type="entry name" value="ATPase_P-typ_cation-transptr_C"/>
</dbReference>
<dbReference type="InterPro" id="IPR004014">
    <property type="entry name" value="ATPase_P-typ_cation-transptr_N"/>
</dbReference>
<dbReference type="InterPro" id="IPR023299">
    <property type="entry name" value="ATPase_P-typ_cyto_dom_N"/>
</dbReference>
<dbReference type="InterPro" id="IPR018303">
    <property type="entry name" value="ATPase_P-typ_P_site"/>
</dbReference>
<dbReference type="InterPro" id="IPR023298">
    <property type="entry name" value="ATPase_P-typ_TM_dom_sf"/>
</dbReference>
<dbReference type="InterPro" id="IPR008250">
    <property type="entry name" value="ATPase_P-typ_transduc_dom_A_sf"/>
</dbReference>
<dbReference type="InterPro" id="IPR036412">
    <property type="entry name" value="HAD-like_sf"/>
</dbReference>
<dbReference type="InterPro" id="IPR023214">
    <property type="entry name" value="HAD_sf"/>
</dbReference>
<dbReference type="InterPro" id="IPR005782">
    <property type="entry name" value="P-type_ATPase_IIA"/>
</dbReference>
<dbReference type="InterPro" id="IPR001757">
    <property type="entry name" value="P_typ_ATPase"/>
</dbReference>
<dbReference type="InterPro" id="IPR044492">
    <property type="entry name" value="P_typ_ATPase_HD_dom"/>
</dbReference>
<dbReference type="NCBIfam" id="TIGR01116">
    <property type="entry name" value="ATPase-IIA1_Ca"/>
    <property type="match status" value="1"/>
</dbReference>
<dbReference type="NCBIfam" id="TIGR01494">
    <property type="entry name" value="ATPase_P-type"/>
    <property type="match status" value="2"/>
</dbReference>
<dbReference type="PANTHER" id="PTHR42861">
    <property type="entry name" value="CALCIUM-TRANSPORTING ATPASE"/>
    <property type="match status" value="1"/>
</dbReference>
<dbReference type="Pfam" id="PF13246">
    <property type="entry name" value="Cation_ATPase"/>
    <property type="match status" value="1"/>
</dbReference>
<dbReference type="Pfam" id="PF00689">
    <property type="entry name" value="Cation_ATPase_C"/>
    <property type="match status" value="1"/>
</dbReference>
<dbReference type="Pfam" id="PF00690">
    <property type="entry name" value="Cation_ATPase_N"/>
    <property type="match status" value="1"/>
</dbReference>
<dbReference type="Pfam" id="PF00122">
    <property type="entry name" value="E1-E2_ATPase"/>
    <property type="match status" value="1"/>
</dbReference>
<dbReference type="Pfam" id="PF00702">
    <property type="entry name" value="Hydrolase"/>
    <property type="match status" value="1"/>
</dbReference>
<dbReference type="PRINTS" id="PR00119">
    <property type="entry name" value="CATATPASE"/>
</dbReference>
<dbReference type="PRINTS" id="PR00120">
    <property type="entry name" value="HATPASE"/>
</dbReference>
<dbReference type="SFLD" id="SFLDG00002">
    <property type="entry name" value="C1.7:_P-type_atpase_like"/>
    <property type="match status" value="1"/>
</dbReference>
<dbReference type="SFLD" id="SFLDF00027">
    <property type="entry name" value="p-type_atpase"/>
    <property type="match status" value="1"/>
</dbReference>
<dbReference type="SMART" id="SM00831">
    <property type="entry name" value="Cation_ATPase_N"/>
    <property type="match status" value="1"/>
</dbReference>
<dbReference type="SUPFAM" id="SSF81653">
    <property type="entry name" value="Calcium ATPase, transduction domain A"/>
    <property type="match status" value="1"/>
</dbReference>
<dbReference type="SUPFAM" id="SSF81665">
    <property type="entry name" value="Calcium ATPase, transmembrane domain M"/>
    <property type="match status" value="1"/>
</dbReference>
<dbReference type="SUPFAM" id="SSF56784">
    <property type="entry name" value="HAD-like"/>
    <property type="match status" value="1"/>
</dbReference>
<dbReference type="SUPFAM" id="SSF81660">
    <property type="entry name" value="Metal cation-transporting ATPase, ATP-binding domain N"/>
    <property type="match status" value="1"/>
</dbReference>
<dbReference type="PROSITE" id="PS00154">
    <property type="entry name" value="ATPASE_E1_E2"/>
    <property type="match status" value="1"/>
</dbReference>